<proteinExistence type="evidence at protein level"/>
<reference evidence="7" key="1">
    <citation type="journal article" date="2005" name="Nature">
        <title>Genome sequence, comparative analysis and haplotype structure of the domestic dog.</title>
        <authorList>
            <person name="Lindblad-Toh K."/>
            <person name="Wade C.M."/>
            <person name="Mikkelsen T.S."/>
            <person name="Karlsson E.K."/>
            <person name="Jaffe D.B."/>
            <person name="Kamal M."/>
            <person name="Clamp M."/>
            <person name="Chang J.L."/>
            <person name="Kulbokas E.J. III"/>
            <person name="Zody M.C."/>
            <person name="Mauceli E."/>
            <person name="Xie X."/>
            <person name="Breen M."/>
            <person name="Wayne R.K."/>
            <person name="Ostrander E.A."/>
            <person name="Ponting C.P."/>
            <person name="Galibert F."/>
            <person name="Smith D.R."/>
            <person name="deJong P.J."/>
            <person name="Kirkness E.F."/>
            <person name="Alvarez P."/>
            <person name="Biagi T."/>
            <person name="Brockman W."/>
            <person name="Butler J."/>
            <person name="Chin C.-W."/>
            <person name="Cook A."/>
            <person name="Cuff J."/>
            <person name="Daly M.J."/>
            <person name="DeCaprio D."/>
            <person name="Gnerre S."/>
            <person name="Grabherr M."/>
            <person name="Kellis M."/>
            <person name="Kleber M."/>
            <person name="Bardeleben C."/>
            <person name="Goodstadt L."/>
            <person name="Heger A."/>
            <person name="Hitte C."/>
            <person name="Kim L."/>
            <person name="Koepfli K.-P."/>
            <person name="Parker H.G."/>
            <person name="Pollinger J.P."/>
            <person name="Searle S.M.J."/>
            <person name="Sutter N.B."/>
            <person name="Thomas R."/>
            <person name="Webber C."/>
            <person name="Baldwin J."/>
            <person name="Abebe A."/>
            <person name="Abouelleil A."/>
            <person name="Aftuck L."/>
            <person name="Ait-Zahra M."/>
            <person name="Aldredge T."/>
            <person name="Allen N."/>
            <person name="An P."/>
            <person name="Anderson S."/>
            <person name="Antoine C."/>
            <person name="Arachchi H."/>
            <person name="Aslam A."/>
            <person name="Ayotte L."/>
            <person name="Bachantsang P."/>
            <person name="Barry A."/>
            <person name="Bayul T."/>
            <person name="Benamara M."/>
            <person name="Berlin A."/>
            <person name="Bessette D."/>
            <person name="Blitshteyn B."/>
            <person name="Bloom T."/>
            <person name="Blye J."/>
            <person name="Boguslavskiy L."/>
            <person name="Bonnet C."/>
            <person name="Boukhgalter B."/>
            <person name="Brown A."/>
            <person name="Cahill P."/>
            <person name="Calixte N."/>
            <person name="Camarata J."/>
            <person name="Cheshatsang Y."/>
            <person name="Chu J."/>
            <person name="Citroen M."/>
            <person name="Collymore A."/>
            <person name="Cooke P."/>
            <person name="Dawoe T."/>
            <person name="Daza R."/>
            <person name="Decktor K."/>
            <person name="DeGray S."/>
            <person name="Dhargay N."/>
            <person name="Dooley K."/>
            <person name="Dooley K."/>
            <person name="Dorje P."/>
            <person name="Dorjee K."/>
            <person name="Dorris L."/>
            <person name="Duffey N."/>
            <person name="Dupes A."/>
            <person name="Egbiremolen O."/>
            <person name="Elong R."/>
            <person name="Falk J."/>
            <person name="Farina A."/>
            <person name="Faro S."/>
            <person name="Ferguson D."/>
            <person name="Ferreira P."/>
            <person name="Fisher S."/>
            <person name="FitzGerald M."/>
            <person name="Foley K."/>
            <person name="Foley C."/>
            <person name="Franke A."/>
            <person name="Friedrich D."/>
            <person name="Gage D."/>
            <person name="Garber M."/>
            <person name="Gearin G."/>
            <person name="Giannoukos G."/>
            <person name="Goode T."/>
            <person name="Goyette A."/>
            <person name="Graham J."/>
            <person name="Grandbois E."/>
            <person name="Gyaltsen K."/>
            <person name="Hafez N."/>
            <person name="Hagopian D."/>
            <person name="Hagos B."/>
            <person name="Hall J."/>
            <person name="Healy C."/>
            <person name="Hegarty R."/>
            <person name="Honan T."/>
            <person name="Horn A."/>
            <person name="Houde N."/>
            <person name="Hughes L."/>
            <person name="Hunnicutt L."/>
            <person name="Husby M."/>
            <person name="Jester B."/>
            <person name="Jones C."/>
            <person name="Kamat A."/>
            <person name="Kanga B."/>
            <person name="Kells C."/>
            <person name="Khazanovich D."/>
            <person name="Kieu A.C."/>
            <person name="Kisner P."/>
            <person name="Kumar M."/>
            <person name="Lance K."/>
            <person name="Landers T."/>
            <person name="Lara M."/>
            <person name="Lee W."/>
            <person name="Leger J.-P."/>
            <person name="Lennon N."/>
            <person name="Leuper L."/>
            <person name="LeVine S."/>
            <person name="Liu J."/>
            <person name="Liu X."/>
            <person name="Lokyitsang Y."/>
            <person name="Lokyitsang T."/>
            <person name="Lui A."/>
            <person name="Macdonald J."/>
            <person name="Major J."/>
            <person name="Marabella R."/>
            <person name="Maru K."/>
            <person name="Matthews C."/>
            <person name="McDonough S."/>
            <person name="Mehta T."/>
            <person name="Meldrim J."/>
            <person name="Melnikov A."/>
            <person name="Meneus L."/>
            <person name="Mihalev A."/>
            <person name="Mihova T."/>
            <person name="Miller K."/>
            <person name="Mittelman R."/>
            <person name="Mlenga V."/>
            <person name="Mulrain L."/>
            <person name="Munson G."/>
            <person name="Navidi A."/>
            <person name="Naylor J."/>
            <person name="Nguyen T."/>
            <person name="Nguyen N."/>
            <person name="Nguyen C."/>
            <person name="Nguyen T."/>
            <person name="Nicol R."/>
            <person name="Norbu N."/>
            <person name="Norbu C."/>
            <person name="Novod N."/>
            <person name="Nyima T."/>
            <person name="Olandt P."/>
            <person name="O'Neill B."/>
            <person name="O'Neill K."/>
            <person name="Osman S."/>
            <person name="Oyono L."/>
            <person name="Patti C."/>
            <person name="Perrin D."/>
            <person name="Phunkhang P."/>
            <person name="Pierre F."/>
            <person name="Priest M."/>
            <person name="Rachupka A."/>
            <person name="Raghuraman S."/>
            <person name="Rameau R."/>
            <person name="Ray V."/>
            <person name="Raymond C."/>
            <person name="Rege F."/>
            <person name="Rise C."/>
            <person name="Rogers J."/>
            <person name="Rogov P."/>
            <person name="Sahalie J."/>
            <person name="Settipalli S."/>
            <person name="Sharpe T."/>
            <person name="Shea T."/>
            <person name="Sheehan M."/>
            <person name="Sherpa N."/>
            <person name="Shi J."/>
            <person name="Shih D."/>
            <person name="Sloan J."/>
            <person name="Smith C."/>
            <person name="Sparrow T."/>
            <person name="Stalker J."/>
            <person name="Stange-Thomann N."/>
            <person name="Stavropoulos S."/>
            <person name="Stone C."/>
            <person name="Stone S."/>
            <person name="Sykes S."/>
            <person name="Tchuinga P."/>
            <person name="Tenzing P."/>
            <person name="Tesfaye S."/>
            <person name="Thoulutsang D."/>
            <person name="Thoulutsang Y."/>
            <person name="Topham K."/>
            <person name="Topping I."/>
            <person name="Tsamla T."/>
            <person name="Vassiliev H."/>
            <person name="Venkataraman V."/>
            <person name="Vo A."/>
            <person name="Wangchuk T."/>
            <person name="Wangdi T."/>
            <person name="Weiand M."/>
            <person name="Wilkinson J."/>
            <person name="Wilson A."/>
            <person name="Yadav S."/>
            <person name="Yang S."/>
            <person name="Yang X."/>
            <person name="Young G."/>
            <person name="Yu Q."/>
            <person name="Zainoun J."/>
            <person name="Zembek L."/>
            <person name="Zimmer A."/>
            <person name="Lander E.S."/>
        </authorList>
    </citation>
    <scope>NUCLEOTIDE SEQUENCE [LARGE SCALE GENOMIC DNA]</scope>
    <source>
        <strain>Boxer</strain>
    </source>
</reference>
<reference evidence="6" key="2">
    <citation type="journal article" date="2011" name="Genes Dev.">
        <title>Angiomotin is a novel Hippo pathway component that inhibits YAP oncoprotein.</title>
        <authorList>
            <person name="Zhao B."/>
            <person name="Li L."/>
            <person name="Lu Q."/>
            <person name="Wang L.H."/>
            <person name="Liu C.Y."/>
            <person name="Lei Q."/>
            <person name="Guan K.L."/>
        </authorList>
    </citation>
    <scope>INTERACTION WITH AMOTL2</scope>
    <scope>SUBCELLULAR LOCATION</scope>
</reference>
<gene>
    <name evidence="2" type="primary">WWTR1</name>
    <name evidence="2" type="synonym">TAZ</name>
</gene>
<comment type="function">
    <text evidence="2">Transcriptional coactivator which acts as a downstream regulatory target in the Hippo signaling pathway that plays a pivotal role in organ size control and tumor suppression by restricting proliferation and promoting apoptosis (By similarity). The core of this pathway is composed of a kinase cascade wherein STK3/MST2 and STK4/MST1, in complex with its regulatory protein SAV1, phosphorylates and activates LATS1/2 in complex with its regulatory protein MOB1, which in turn phosphorylates and inactivates YAP1 oncoprotein and WWTR1/TAZ (By similarity). WWTR1 enhances PAX8 and NKX2-1/TTF1-dependent gene activation (By similarity). In conjunction with YAP1, involved in the regulation of TGFB1-dependent SMAD2 and SMAD3 nuclear accumulation (By similarity). Plays a key role in coupling SMADs to the transcriptional machinery such as the mediator complex (By similarity). Regulates embryonic stem-cell self-renewal, promotes cell proliferation and epithelial-mesenchymal transition (By similarity).</text>
</comment>
<comment type="subunit">
    <text evidence="1 2 5">Binds to SLC9A3R2 via the PDZ motif at the plasma membrane (By similarity). Binds to YWHAZ in vivo and in vitro through the phosphoserine-binding motif RSHSSP (By similarity). Interacts (via coiled-coil domain) with SMAD2 (via MH1 domain), SMAD3 and SMAD4 (By similarity). Interacts with MED15 (By similarity). Interacts with PAX8 and NKX2-1 (By similarity). Interacts with TEAD1, TEAD2, TEAD3 and TEAD4 (By similarity). Interacts (via WW domain) with PALS1 (By similarity). Interacts with LATS1 (By similarity). Interacts with YAP1 (when phosphorylated at 'Ser-112') (By similarity). Interacts (via WW domain) with PRRG4 (via cytoplasmic domain) (By similarity). Interacts (via WW domain) with AMOTL2 (via PPXY motif); the interaction promotes WWTR1/TAZ localization to the cytoplasm and tight junctions, thereby inhibiting its transcriptional coactivator properties (PubMed:21205866). Interacts (via WW domain) with AMOT; the interaction facilitates translocation of WWTR1/TAZ to the cytoplasm (By similarity).</text>
</comment>
<comment type="subcellular location">
    <subcellularLocation>
        <location evidence="5">Cytoplasm</location>
    </subcellularLocation>
    <subcellularLocation>
        <location evidence="2">Nucleus</location>
    </subcellularLocation>
    <subcellularLocation>
        <location evidence="2">Cell membrane</location>
    </subcellularLocation>
    <subcellularLocation>
        <location evidence="5">Cell junction</location>
        <location evidence="5">Tight junction</location>
    </subcellularLocation>
    <text evidence="1 2 5">Concentrates along specific portions of the plasma membrane, and accumulates in punctate nuclear bodies (By similarity). When phosphorylated, is retained in the cytoplasm by YWHAZ (By similarity). Can be retained in the nucleus by MED15 (By similarity). Localized in the cytoplasm in areas of epithelial cell high density (By similarity). At blastocyst stage expressed in the nucleus in trophectodermal cells, however expressed in the cytoplasm in the inner cell mass (By similarity). In the nucleus, phosphorylation by PRP4K induces nuclear exclusion (By similarity). Interaction with AMOTL2 results in localization to the cytoplasm and tight junctions (PubMed:21205866).</text>
</comment>
<comment type="domain">
    <text evidence="1">The PDZ-binding motif is essential for stimulated gene transcription. It localizes the protein into both punctate nuclear foci and plasma membrane-associated complexes.</text>
</comment>
<comment type="domain">
    <text evidence="1">Binds to transcription factors via its WW domain.</text>
</comment>
<comment type="PTM">
    <text evidence="1">Phosphorylated by LATS2 and STK3/MST2. Phosphorylation by LATS2 results in creation of 14-3-3 binding sites, retention in the cytoplasm, and functional inactivation (By similarity). Phosphorylation results in the inhibition of transcriptional coactivation through YWHAZ-mediated nuclear export (By similarity).</text>
</comment>
<comment type="PTM">
    <text evidence="1">Ubiquitinated at Lys-46; leading to proteasomal degradation. Deubiquitinated and stabilized by UCHL1 at Lys-46; leading to inhibition of osteoclastogenesis.</text>
</comment>
<sequence>MNPASVPPALPPPGQQVIHVTQDLDTDLEALFNSVMNPKPSSWRKKILPESFFKEPDSGSHSRQSSTDSSGGHAGPRLAGGAQHVRSHSSPASLQLGPGAGAAGSPAQQHAHLRQQSYDVTDELPLPPGWEMTFTATGQRYFLNHIEKITTWQDPRKAMNQSLNPMNLHPAATSTPASQRSMAVSQPNLVMNHQHQQQMAPTNLSQQNHPTQNPPAGLMSMPNALTTQQQQQQKLRLQRIQMERERIRMRQEELMRQEAALCRQLPMEAETLATVQAAVNPPAMTPDMRSITNNSSDPFLNGGPYHSREQSTDSGLGLGCYSVPTTPEDFLSNVDEMDTGENAGQTPMNINPQQTRFPDFLDCLPGTNVDLGTLESEDLIPLFNDVESALNKSEPFLTWL</sequence>
<keyword id="KW-0010">Activator</keyword>
<keyword id="KW-0965">Cell junction</keyword>
<keyword id="KW-1003">Cell membrane</keyword>
<keyword id="KW-0963">Cytoplasm</keyword>
<keyword id="KW-1017">Isopeptide bond</keyword>
<keyword id="KW-0472">Membrane</keyword>
<keyword id="KW-0539">Nucleus</keyword>
<keyword id="KW-0597">Phosphoprotein</keyword>
<keyword id="KW-1185">Reference proteome</keyword>
<keyword id="KW-0796">Tight junction</keyword>
<keyword id="KW-0832">Ubl conjugation</keyword>
<feature type="chain" id="PRO_0000460837" description="WW domain-containing transcription regulator protein 1">
    <location>
        <begin position="1"/>
        <end position="400"/>
    </location>
</feature>
<feature type="domain" description="WW" evidence="3">
    <location>
        <begin position="124"/>
        <end position="157"/>
    </location>
</feature>
<feature type="region of interest" description="Disordered" evidence="4">
    <location>
        <begin position="52"/>
        <end position="117"/>
    </location>
</feature>
<feature type="region of interest" description="Disordered" evidence="4">
    <location>
        <begin position="192"/>
        <end position="216"/>
    </location>
</feature>
<feature type="region of interest" description="Required for interaction with PALS1" evidence="2">
    <location>
        <begin position="222"/>
        <end position="400"/>
    </location>
</feature>
<feature type="short sequence motif" description="PDZ-binding" evidence="2">
    <location>
        <begin position="394"/>
        <end position="400"/>
    </location>
</feature>
<feature type="compositionally biased region" description="Polar residues" evidence="4">
    <location>
        <begin position="61"/>
        <end position="70"/>
    </location>
</feature>
<feature type="compositionally biased region" description="Low complexity" evidence="4">
    <location>
        <begin position="91"/>
        <end position="110"/>
    </location>
</feature>
<feature type="compositionally biased region" description="Polar residues" evidence="4">
    <location>
        <begin position="192"/>
        <end position="211"/>
    </location>
</feature>
<feature type="modified residue" description="Phosphoserine" evidence="2">
    <location>
        <position position="62"/>
    </location>
</feature>
<feature type="modified residue" description="Phosphoserine" evidence="1">
    <location>
        <position position="89"/>
    </location>
</feature>
<feature type="modified residue" description="Phosphoserine" evidence="2">
    <location>
        <position position="295"/>
    </location>
</feature>
<feature type="modified residue" description="Phosphoserine" evidence="2">
    <location>
        <position position="311"/>
    </location>
</feature>
<feature type="cross-link" description="Glycyl lysine isopeptide (Lys-Gly) (interchain with G-Cter in ubiquitin)" evidence="1">
    <location>
        <position position="46"/>
    </location>
</feature>
<protein>
    <recommendedName>
        <fullName evidence="2">WW domain-containing transcription regulator protein 1</fullName>
    </recommendedName>
    <alternativeName>
        <fullName evidence="2">Transcriptional coactivator with PDZ-binding motif</fullName>
    </alternativeName>
</protein>
<dbReference type="RefSeq" id="XP_038288578.1">
    <property type="nucleotide sequence ID" value="XM_038432650.1"/>
</dbReference>
<dbReference type="RefSeq" id="XP_038288579.1">
    <property type="nucleotide sequence ID" value="XM_038432651.1"/>
</dbReference>
<dbReference type="RefSeq" id="XP_038313010.1">
    <property type="nucleotide sequence ID" value="XM_038457082.1"/>
</dbReference>
<dbReference type="RefSeq" id="XP_038427117.1">
    <property type="nucleotide sequence ID" value="XM_038571189.1"/>
</dbReference>
<dbReference type="RefSeq" id="XP_038427118.1">
    <property type="nucleotide sequence ID" value="XM_038571190.1"/>
</dbReference>
<dbReference type="RefSeq" id="XP_852547.1">
    <property type="nucleotide sequence ID" value="XM_847454.6"/>
</dbReference>
<dbReference type="FunCoup" id="A0A8I3PQN6">
    <property type="interactions" value="240"/>
</dbReference>
<dbReference type="Ensembl" id="ENSCAFT00805045533">
    <property type="protein sequence ID" value="ENSCAFP00805035682"/>
    <property type="gene ID" value="ENSCAFG00805025039"/>
</dbReference>
<dbReference type="Ensembl" id="ENSCAFT00845042653.1">
    <property type="protein sequence ID" value="ENSCAFP00845033446.1"/>
    <property type="gene ID" value="ENSCAFG00845024146.1"/>
</dbReference>
<dbReference type="GeneID" id="609743"/>
<dbReference type="CTD" id="25937"/>
<dbReference type="GeneTree" id="ENSGT00510000046760"/>
<dbReference type="OrthoDB" id="3045089at2759"/>
<dbReference type="Reactome" id="R-CFA-2028269">
    <property type="pathway name" value="Signaling by Hippo"/>
</dbReference>
<dbReference type="Reactome" id="R-CFA-2032785">
    <property type="pathway name" value="YAP1- and WWTR1 (TAZ)-stimulated gene expression"/>
</dbReference>
<dbReference type="Reactome" id="R-CFA-2173796">
    <property type="pathway name" value="SMAD2/SMAD3:SMAD4 heterotrimer regulates transcription"/>
</dbReference>
<dbReference type="Proteomes" id="UP000002254">
    <property type="component" value="Unplaced"/>
</dbReference>
<dbReference type="Proteomes" id="UP000694429">
    <property type="component" value="Unplaced"/>
</dbReference>
<dbReference type="Proteomes" id="UP000694542">
    <property type="component" value="Unplaced"/>
</dbReference>
<dbReference type="Proteomes" id="UP000805418">
    <property type="component" value="Chromosome 23"/>
</dbReference>
<dbReference type="GO" id="GO:0005923">
    <property type="term" value="C:bicellular tight junction"/>
    <property type="evidence" value="ECO:0007669"/>
    <property type="project" value="UniProtKB-SubCell"/>
</dbReference>
<dbReference type="GO" id="GO:0005829">
    <property type="term" value="C:cytosol"/>
    <property type="evidence" value="ECO:0007669"/>
    <property type="project" value="Ensembl"/>
</dbReference>
<dbReference type="GO" id="GO:0016604">
    <property type="term" value="C:nuclear body"/>
    <property type="evidence" value="ECO:0007669"/>
    <property type="project" value="Ensembl"/>
</dbReference>
<dbReference type="GO" id="GO:0005634">
    <property type="term" value="C:nucleus"/>
    <property type="evidence" value="ECO:0000314"/>
    <property type="project" value="UniProtKB"/>
</dbReference>
<dbReference type="GO" id="GO:0005886">
    <property type="term" value="C:plasma membrane"/>
    <property type="evidence" value="ECO:0007669"/>
    <property type="project" value="UniProtKB-SubCell"/>
</dbReference>
<dbReference type="GO" id="GO:0070160">
    <property type="term" value="C:tight junction"/>
    <property type="evidence" value="ECO:0000314"/>
    <property type="project" value="UniProtKB"/>
</dbReference>
<dbReference type="GO" id="GO:0005667">
    <property type="term" value="C:transcription regulator complex"/>
    <property type="evidence" value="ECO:0007669"/>
    <property type="project" value="Ensembl"/>
</dbReference>
<dbReference type="GO" id="GO:0042803">
    <property type="term" value="F:protein homodimerization activity"/>
    <property type="evidence" value="ECO:0007669"/>
    <property type="project" value="Ensembl"/>
</dbReference>
<dbReference type="GO" id="GO:0003713">
    <property type="term" value="F:transcription coactivator activity"/>
    <property type="evidence" value="ECO:0000318"/>
    <property type="project" value="GO_Central"/>
</dbReference>
<dbReference type="GO" id="GO:0003714">
    <property type="term" value="F:transcription corepressor activity"/>
    <property type="evidence" value="ECO:0000318"/>
    <property type="project" value="GO_Central"/>
</dbReference>
<dbReference type="GO" id="GO:0060271">
    <property type="term" value="P:cilium assembly"/>
    <property type="evidence" value="ECO:0007669"/>
    <property type="project" value="Ensembl"/>
</dbReference>
<dbReference type="GO" id="GO:0032835">
    <property type="term" value="P:glomerulus development"/>
    <property type="evidence" value="ECO:0007669"/>
    <property type="project" value="Ensembl"/>
</dbReference>
<dbReference type="GO" id="GO:0003015">
    <property type="term" value="P:heart process"/>
    <property type="evidence" value="ECO:0007669"/>
    <property type="project" value="Ensembl"/>
</dbReference>
<dbReference type="GO" id="GO:0035329">
    <property type="term" value="P:hippo signaling"/>
    <property type="evidence" value="ECO:0000318"/>
    <property type="project" value="GO_Central"/>
</dbReference>
<dbReference type="GO" id="GO:0060993">
    <property type="term" value="P:kidney morphogenesis"/>
    <property type="evidence" value="ECO:0007669"/>
    <property type="project" value="Ensembl"/>
</dbReference>
<dbReference type="GO" id="GO:0048762">
    <property type="term" value="P:mesenchymal cell differentiation"/>
    <property type="evidence" value="ECO:0007669"/>
    <property type="project" value="Ensembl"/>
</dbReference>
<dbReference type="GO" id="GO:0035264">
    <property type="term" value="P:multicellular organism growth"/>
    <property type="evidence" value="ECO:0007669"/>
    <property type="project" value="Ensembl"/>
</dbReference>
<dbReference type="GO" id="GO:0090090">
    <property type="term" value="P:negative regulation of canonical Wnt signaling pathway"/>
    <property type="evidence" value="ECO:0007669"/>
    <property type="project" value="Ensembl"/>
</dbReference>
<dbReference type="GO" id="GO:0045599">
    <property type="term" value="P:negative regulation of fat cell differentiation"/>
    <property type="evidence" value="ECO:0007669"/>
    <property type="project" value="Ensembl"/>
</dbReference>
<dbReference type="GO" id="GO:0000122">
    <property type="term" value="P:negative regulation of transcription by RNA polymerase II"/>
    <property type="evidence" value="ECO:0007669"/>
    <property type="project" value="Ensembl"/>
</dbReference>
<dbReference type="GO" id="GO:0001649">
    <property type="term" value="P:osteoblast differentiation"/>
    <property type="evidence" value="ECO:0007669"/>
    <property type="project" value="Ensembl"/>
</dbReference>
<dbReference type="GO" id="GO:0008284">
    <property type="term" value="P:positive regulation of cell population proliferation"/>
    <property type="evidence" value="ECO:0007669"/>
    <property type="project" value="Ensembl"/>
</dbReference>
<dbReference type="GO" id="GO:0010718">
    <property type="term" value="P:positive regulation of epithelial to mesenchymal transition"/>
    <property type="evidence" value="ECO:0007669"/>
    <property type="project" value="Ensembl"/>
</dbReference>
<dbReference type="GO" id="GO:0045669">
    <property type="term" value="P:positive regulation of osteoblast differentiation"/>
    <property type="evidence" value="ECO:0007669"/>
    <property type="project" value="Ensembl"/>
</dbReference>
<dbReference type="GO" id="GO:1900182">
    <property type="term" value="P:positive regulation of protein localization to nucleus"/>
    <property type="evidence" value="ECO:0007669"/>
    <property type="project" value="Ensembl"/>
</dbReference>
<dbReference type="GO" id="GO:0045944">
    <property type="term" value="P:positive regulation of transcription by RNA polymerase II"/>
    <property type="evidence" value="ECO:0000318"/>
    <property type="project" value="GO_Central"/>
</dbReference>
<dbReference type="GO" id="GO:0016567">
    <property type="term" value="P:protein ubiquitination"/>
    <property type="evidence" value="ECO:0007669"/>
    <property type="project" value="Ensembl"/>
</dbReference>
<dbReference type="GO" id="GO:0072307">
    <property type="term" value="P:regulation of metanephric nephron tubule epithelial cell differentiation"/>
    <property type="evidence" value="ECO:0007669"/>
    <property type="project" value="Ensembl"/>
</dbReference>
<dbReference type="GO" id="GO:0031146">
    <property type="term" value="P:SCF-dependent proteasomal ubiquitin-dependent protein catabolic process"/>
    <property type="evidence" value="ECO:0007669"/>
    <property type="project" value="Ensembl"/>
</dbReference>
<dbReference type="GO" id="GO:0060395">
    <property type="term" value="P:SMAD protein signal transduction"/>
    <property type="evidence" value="ECO:0007669"/>
    <property type="project" value="Ensembl"/>
</dbReference>
<dbReference type="GO" id="GO:0017145">
    <property type="term" value="P:stem cell division"/>
    <property type="evidence" value="ECO:0007669"/>
    <property type="project" value="Ensembl"/>
</dbReference>
<dbReference type="GO" id="GO:0001894">
    <property type="term" value="P:tissue homeostasis"/>
    <property type="evidence" value="ECO:0007669"/>
    <property type="project" value="Ensembl"/>
</dbReference>
<dbReference type="CDD" id="cd00201">
    <property type="entry name" value="WW"/>
    <property type="match status" value="1"/>
</dbReference>
<dbReference type="FunFam" id="2.20.70.10:FF:000012">
    <property type="entry name" value="transcriptional coactivator YAP1 isoform X2"/>
    <property type="match status" value="1"/>
</dbReference>
<dbReference type="Gene3D" id="2.20.70.10">
    <property type="match status" value="1"/>
</dbReference>
<dbReference type="Gene3D" id="6.20.430.10">
    <property type="match status" value="1"/>
</dbReference>
<dbReference type="InterPro" id="IPR001202">
    <property type="entry name" value="WW_dom"/>
</dbReference>
<dbReference type="InterPro" id="IPR036020">
    <property type="entry name" value="WW_dom_sf"/>
</dbReference>
<dbReference type="InterPro" id="IPR051583">
    <property type="entry name" value="YAP1"/>
</dbReference>
<dbReference type="PANTHER" id="PTHR17616:SF6">
    <property type="entry name" value="WW DOMAIN-CONTAINING TRANSCRIPTION REGULATOR PROTEIN 1"/>
    <property type="match status" value="1"/>
</dbReference>
<dbReference type="PANTHER" id="PTHR17616">
    <property type="entry name" value="YES-ASSOCIATED PROTEIN YAP1 FAMILY MEMBER"/>
    <property type="match status" value="1"/>
</dbReference>
<dbReference type="Pfam" id="PF00397">
    <property type="entry name" value="WW"/>
    <property type="match status" value="1"/>
</dbReference>
<dbReference type="SMART" id="SM00456">
    <property type="entry name" value="WW"/>
    <property type="match status" value="1"/>
</dbReference>
<dbReference type="SUPFAM" id="SSF51045">
    <property type="entry name" value="WW domain"/>
    <property type="match status" value="1"/>
</dbReference>
<dbReference type="PROSITE" id="PS01159">
    <property type="entry name" value="WW_DOMAIN_1"/>
    <property type="match status" value="1"/>
</dbReference>
<dbReference type="PROSITE" id="PS50020">
    <property type="entry name" value="WW_DOMAIN_2"/>
    <property type="match status" value="1"/>
</dbReference>
<name>WWTR1_CANLF</name>
<accession>A0A8I3PQN6</accession>
<accession>A0A8P0NAJ7</accession>
<organism evidence="8">
    <name type="scientific">Canis lupus familiaris</name>
    <name type="common">Dog</name>
    <name type="synonym">Canis familiaris</name>
    <dbReference type="NCBI Taxonomy" id="9615"/>
    <lineage>
        <taxon>Eukaryota</taxon>
        <taxon>Metazoa</taxon>
        <taxon>Chordata</taxon>
        <taxon>Craniata</taxon>
        <taxon>Vertebrata</taxon>
        <taxon>Euteleostomi</taxon>
        <taxon>Mammalia</taxon>
        <taxon>Eutheria</taxon>
        <taxon>Laurasiatheria</taxon>
        <taxon>Carnivora</taxon>
        <taxon>Caniformia</taxon>
        <taxon>Canidae</taxon>
        <taxon>Canis</taxon>
    </lineage>
</organism>
<evidence type="ECO:0000250" key="1">
    <source>
        <dbReference type="UniProtKB" id="Q9EPK5"/>
    </source>
</evidence>
<evidence type="ECO:0000250" key="2">
    <source>
        <dbReference type="UniProtKB" id="Q9GZV5"/>
    </source>
</evidence>
<evidence type="ECO:0000255" key="3">
    <source>
        <dbReference type="PROSITE-ProRule" id="PRU00224"/>
    </source>
</evidence>
<evidence type="ECO:0000256" key="4">
    <source>
        <dbReference type="SAM" id="MobiDB-lite"/>
    </source>
</evidence>
<evidence type="ECO:0000269" key="5">
    <source>
    </source>
</evidence>
<evidence type="ECO:0000305" key="6"/>
<evidence type="ECO:0000312" key="7">
    <source>
        <dbReference type="Proteomes" id="UP000002254"/>
    </source>
</evidence>
<evidence type="ECO:0000312" key="8">
    <source>
        <dbReference type="Proteomes" id="UP000805418"/>
    </source>
</evidence>